<evidence type="ECO:0000255" key="1">
    <source>
        <dbReference type="HAMAP-Rule" id="MF_00534"/>
    </source>
</evidence>
<reference key="1">
    <citation type="journal article" date="2003" name="Mol. Microbiol.">
        <title>An integrated analysis of the genome of the hyperthermophilic archaeon Pyrococcus abyssi.</title>
        <authorList>
            <person name="Cohen G.N."/>
            <person name="Barbe V."/>
            <person name="Flament D."/>
            <person name="Galperin M."/>
            <person name="Heilig R."/>
            <person name="Lecompte O."/>
            <person name="Poch O."/>
            <person name="Prieur D."/>
            <person name="Querellou J."/>
            <person name="Ripp R."/>
            <person name="Thierry J.-C."/>
            <person name="Van der Oost J."/>
            <person name="Weissenbach J."/>
            <person name="Zivanovic Y."/>
            <person name="Forterre P."/>
        </authorList>
    </citation>
    <scope>NUCLEOTIDE SEQUENCE [LARGE SCALE GENOMIC DNA]</scope>
    <source>
        <strain>GE5 / Orsay</strain>
    </source>
</reference>
<reference key="2">
    <citation type="journal article" date="2012" name="Curr. Microbiol.">
        <title>Re-annotation of two hyperthermophilic archaea Pyrococcus abyssi GE5 and Pyrococcus furiosus DSM 3638.</title>
        <authorList>
            <person name="Gao J."/>
            <person name="Wang J."/>
        </authorList>
    </citation>
    <scope>GENOME REANNOTATION</scope>
    <source>
        <strain>GE5 / Orsay</strain>
    </source>
</reference>
<feature type="chain" id="PRO_0000176485" description="Asparagine--tRNA ligase">
    <location>
        <begin position="1"/>
        <end position="434"/>
    </location>
</feature>
<comment type="catalytic activity">
    <reaction evidence="1">
        <text>tRNA(Asn) + L-asparagine + ATP = L-asparaginyl-tRNA(Asn) + AMP + diphosphate + H(+)</text>
        <dbReference type="Rhea" id="RHEA:11180"/>
        <dbReference type="Rhea" id="RHEA-COMP:9659"/>
        <dbReference type="Rhea" id="RHEA-COMP:9674"/>
        <dbReference type="ChEBI" id="CHEBI:15378"/>
        <dbReference type="ChEBI" id="CHEBI:30616"/>
        <dbReference type="ChEBI" id="CHEBI:33019"/>
        <dbReference type="ChEBI" id="CHEBI:58048"/>
        <dbReference type="ChEBI" id="CHEBI:78442"/>
        <dbReference type="ChEBI" id="CHEBI:78515"/>
        <dbReference type="ChEBI" id="CHEBI:456215"/>
        <dbReference type="EC" id="6.1.1.22"/>
    </reaction>
</comment>
<comment type="subcellular location">
    <subcellularLocation>
        <location>Cytoplasm</location>
    </subcellularLocation>
</comment>
<comment type="similarity">
    <text evidence="1">Belongs to the class-II aminoacyl-tRNA synthetase family.</text>
</comment>
<gene>
    <name evidence="1" type="primary">asnS</name>
    <name type="ordered locus">PYRAB02230</name>
    <name type="ORF">PAB2203</name>
</gene>
<proteinExistence type="inferred from homology"/>
<name>SYN_PYRAB</name>
<accession>Q9V251</accession>
<accession>G8ZG58</accession>
<keyword id="KW-0030">Aminoacyl-tRNA synthetase</keyword>
<keyword id="KW-0067">ATP-binding</keyword>
<keyword id="KW-0963">Cytoplasm</keyword>
<keyword id="KW-0436">Ligase</keyword>
<keyword id="KW-0547">Nucleotide-binding</keyword>
<keyword id="KW-0648">Protein biosynthesis</keyword>
<dbReference type="EC" id="6.1.1.22" evidence="1"/>
<dbReference type="EMBL" id="AJ248283">
    <property type="protein sequence ID" value="CAB49147.1"/>
    <property type="molecule type" value="Genomic_DNA"/>
</dbReference>
<dbReference type="EMBL" id="HE613800">
    <property type="protein sequence ID" value="CCE69599.1"/>
    <property type="molecule type" value="Genomic_DNA"/>
</dbReference>
<dbReference type="PIR" id="D75212">
    <property type="entry name" value="D75212"/>
</dbReference>
<dbReference type="RefSeq" id="WP_010867347.1">
    <property type="nucleotide sequence ID" value="NC_000868.1"/>
</dbReference>
<dbReference type="SMR" id="Q9V251"/>
<dbReference type="STRING" id="272844.PAB2203"/>
<dbReference type="KEGG" id="pab:PAB2203"/>
<dbReference type="PATRIC" id="fig|272844.11.peg.239"/>
<dbReference type="eggNOG" id="arCOG00407">
    <property type="taxonomic scope" value="Archaea"/>
</dbReference>
<dbReference type="HOGENOM" id="CLU_004553_2_0_2"/>
<dbReference type="OrthoDB" id="5908at2157"/>
<dbReference type="PhylomeDB" id="Q9V251"/>
<dbReference type="Proteomes" id="UP000000810">
    <property type="component" value="Chromosome"/>
</dbReference>
<dbReference type="Proteomes" id="UP000009139">
    <property type="component" value="Chromosome"/>
</dbReference>
<dbReference type="GO" id="GO:0005737">
    <property type="term" value="C:cytoplasm"/>
    <property type="evidence" value="ECO:0007669"/>
    <property type="project" value="UniProtKB-SubCell"/>
</dbReference>
<dbReference type="GO" id="GO:0004816">
    <property type="term" value="F:asparagine-tRNA ligase activity"/>
    <property type="evidence" value="ECO:0007669"/>
    <property type="project" value="UniProtKB-UniRule"/>
</dbReference>
<dbReference type="GO" id="GO:0005524">
    <property type="term" value="F:ATP binding"/>
    <property type="evidence" value="ECO:0007669"/>
    <property type="project" value="UniProtKB-UniRule"/>
</dbReference>
<dbReference type="GO" id="GO:0003676">
    <property type="term" value="F:nucleic acid binding"/>
    <property type="evidence" value="ECO:0007669"/>
    <property type="project" value="InterPro"/>
</dbReference>
<dbReference type="GO" id="GO:0006421">
    <property type="term" value="P:asparaginyl-tRNA aminoacylation"/>
    <property type="evidence" value="ECO:0007669"/>
    <property type="project" value="UniProtKB-UniRule"/>
</dbReference>
<dbReference type="CDD" id="cd00776">
    <property type="entry name" value="AsxRS_core"/>
    <property type="match status" value="1"/>
</dbReference>
<dbReference type="CDD" id="cd04319">
    <property type="entry name" value="PhAsnRS_like_N"/>
    <property type="match status" value="1"/>
</dbReference>
<dbReference type="Gene3D" id="3.30.930.10">
    <property type="entry name" value="Bira Bifunctional Protein, Domain 2"/>
    <property type="match status" value="1"/>
</dbReference>
<dbReference type="Gene3D" id="2.40.50.140">
    <property type="entry name" value="Nucleic acid-binding proteins"/>
    <property type="match status" value="1"/>
</dbReference>
<dbReference type="HAMAP" id="MF_00534">
    <property type="entry name" value="Asn_tRNA_synth"/>
    <property type="match status" value="1"/>
</dbReference>
<dbReference type="InterPro" id="IPR004364">
    <property type="entry name" value="Aa-tRNA-synt_II"/>
</dbReference>
<dbReference type="InterPro" id="IPR006195">
    <property type="entry name" value="aa-tRNA-synth_II"/>
</dbReference>
<dbReference type="InterPro" id="IPR045864">
    <property type="entry name" value="aa-tRNA-synth_II/BPL/LPL"/>
</dbReference>
<dbReference type="InterPro" id="IPR004522">
    <property type="entry name" value="Asn-tRNA-ligase"/>
</dbReference>
<dbReference type="InterPro" id="IPR002312">
    <property type="entry name" value="Asp/Asn-tRNA-synth_IIb"/>
</dbReference>
<dbReference type="InterPro" id="IPR012340">
    <property type="entry name" value="NA-bd_OB-fold"/>
</dbReference>
<dbReference type="InterPro" id="IPR004365">
    <property type="entry name" value="NA-bd_OB_tRNA"/>
</dbReference>
<dbReference type="NCBIfam" id="TIGR00457">
    <property type="entry name" value="asnS"/>
    <property type="match status" value="1"/>
</dbReference>
<dbReference type="NCBIfam" id="NF003037">
    <property type="entry name" value="PRK03932.1"/>
    <property type="match status" value="1"/>
</dbReference>
<dbReference type="NCBIfam" id="NF003483">
    <property type="entry name" value="PRK05159.1"/>
    <property type="match status" value="1"/>
</dbReference>
<dbReference type="PANTHER" id="PTHR22594:SF34">
    <property type="entry name" value="ASPARAGINE--TRNA LIGASE, MITOCHONDRIAL-RELATED"/>
    <property type="match status" value="1"/>
</dbReference>
<dbReference type="PANTHER" id="PTHR22594">
    <property type="entry name" value="ASPARTYL/LYSYL-TRNA SYNTHETASE"/>
    <property type="match status" value="1"/>
</dbReference>
<dbReference type="Pfam" id="PF00152">
    <property type="entry name" value="tRNA-synt_2"/>
    <property type="match status" value="1"/>
</dbReference>
<dbReference type="Pfam" id="PF01336">
    <property type="entry name" value="tRNA_anti-codon"/>
    <property type="match status" value="1"/>
</dbReference>
<dbReference type="PRINTS" id="PR01042">
    <property type="entry name" value="TRNASYNTHASP"/>
</dbReference>
<dbReference type="SUPFAM" id="SSF55681">
    <property type="entry name" value="Class II aaRS and biotin synthetases"/>
    <property type="match status" value="1"/>
</dbReference>
<dbReference type="SUPFAM" id="SSF50249">
    <property type="entry name" value="Nucleic acid-binding proteins"/>
    <property type="match status" value="1"/>
</dbReference>
<dbReference type="PROSITE" id="PS50862">
    <property type="entry name" value="AA_TRNA_LIGASE_II"/>
    <property type="match status" value="1"/>
</dbReference>
<sequence length="434" mass="50242">MIEKTYCQDIKPELDGKRVKLAGWVYSNMRVGKKIFLWIRDSTGIIQTVIAKNVVGEDVFETAKKLGRESSVIVEGIVKADERAPGGAEVHVEKLKVIQAVSEFPIPENPEQASPELLLDYRHLHIRSPKVSAIMRVKETLIMAAREWLLREGWHEVFPPILVTGAVEGGATLFKLKYFDKVAYLSQSAQLYLEAAIFGLEKVWSLTPSFRAEKSRTRRHLTEFWHLELEAAWMDLWDIMKVEEELVSYMVQRTLELRKKEIEMFRDDLTTLKNTEPPFPRISYDEAIEILQSKGVKIEWGDDMGADEERVLTQEFDRPFFVYGYPKHIKAFYMKEDPNDPRKVLAADMLAPEGYGEIIGGSEREDNYDKLVQRIKEEGMDPKDYEWYLDLRKYGSVPHSGFGLGVERLVAWVLKLDHIRWATLFPRTPARIYP</sequence>
<organism>
    <name type="scientific">Pyrococcus abyssi (strain GE5 / Orsay)</name>
    <dbReference type="NCBI Taxonomy" id="272844"/>
    <lineage>
        <taxon>Archaea</taxon>
        <taxon>Methanobacteriati</taxon>
        <taxon>Methanobacteriota</taxon>
        <taxon>Thermococci</taxon>
        <taxon>Thermococcales</taxon>
        <taxon>Thermococcaceae</taxon>
        <taxon>Pyrococcus</taxon>
    </lineage>
</organism>
<protein>
    <recommendedName>
        <fullName evidence="1">Asparagine--tRNA ligase</fullName>
        <ecNumber evidence="1">6.1.1.22</ecNumber>
    </recommendedName>
    <alternativeName>
        <fullName evidence="1">Asparaginyl-tRNA synthetase</fullName>
        <shortName evidence="1">AsnRS</shortName>
    </alternativeName>
</protein>